<proteinExistence type="evidence at protein level"/>
<name>TRAP_PLAFA</name>
<keyword id="KW-0002">3D-structure</keyword>
<keyword id="KW-0130">Cell adhesion</keyword>
<keyword id="KW-1003">Cell membrane</keyword>
<keyword id="KW-1015">Disulfide bond</keyword>
<keyword id="KW-0325">Glycoprotein</keyword>
<keyword id="KW-0358">Heparin-binding</keyword>
<keyword id="KW-1017">Isopeptide bond</keyword>
<keyword id="KW-0461">Malaria</keyword>
<keyword id="KW-0472">Membrane</keyword>
<keyword id="KW-0732">Signal</keyword>
<keyword id="KW-0812">Transmembrane</keyword>
<keyword id="KW-1133">Transmembrane helix</keyword>
<feature type="signal peptide" evidence="1">
    <location>
        <begin position="1"/>
        <end position="25"/>
    </location>
</feature>
<feature type="chain" id="PRO_0000024629" description="Thrombospondin-related anonymous protein">
    <location>
        <begin position="26"/>
        <end position="559"/>
    </location>
</feature>
<feature type="topological domain" description="Extracellular" evidence="1">
    <location>
        <begin position="26"/>
        <end position="496"/>
    </location>
</feature>
<feature type="transmembrane region" description="Helical" evidence="1">
    <location>
        <begin position="497"/>
        <end position="515"/>
    </location>
</feature>
<feature type="topological domain" description="Cytoplasmic" evidence="1">
    <location>
        <begin position="516"/>
        <end position="559"/>
    </location>
</feature>
<feature type="domain" description="VWFA" evidence="3">
    <location>
        <begin position="48"/>
        <end position="234"/>
    </location>
</feature>
<feature type="domain" description="TSP type-1" evidence="2">
    <location>
        <begin position="241"/>
        <end position="287"/>
    </location>
</feature>
<feature type="region of interest" description="Disordered" evidence="4">
    <location>
        <begin position="280"/>
        <end position="496"/>
    </location>
</feature>
<feature type="region of interest" description="Disordered" evidence="4">
    <location>
        <begin position="523"/>
        <end position="559"/>
    </location>
</feature>
<feature type="short sequence motif" description="Cell attachment site">
    <location>
        <begin position="307"/>
        <end position="309"/>
    </location>
</feature>
<feature type="compositionally biased region" description="Basic and acidic residues" evidence="4">
    <location>
        <begin position="283"/>
        <end position="292"/>
    </location>
</feature>
<feature type="compositionally biased region" description="Basic and acidic residues" evidence="4">
    <location>
        <begin position="370"/>
        <end position="400"/>
    </location>
</feature>
<feature type="compositionally biased region" description="Polar residues" evidence="4">
    <location>
        <begin position="431"/>
        <end position="440"/>
    </location>
</feature>
<feature type="compositionally biased region" description="Basic and acidic residues" evidence="4">
    <location>
        <begin position="444"/>
        <end position="459"/>
    </location>
</feature>
<feature type="compositionally biased region" description="Basic and acidic residues" evidence="4">
    <location>
        <begin position="466"/>
        <end position="495"/>
    </location>
</feature>
<feature type="compositionally biased region" description="Acidic residues" evidence="4">
    <location>
        <begin position="536"/>
        <end position="547"/>
    </location>
</feature>
<feature type="compositionally biased region" description="Basic and acidic residues" evidence="4">
    <location>
        <begin position="548"/>
        <end position="559"/>
    </location>
</feature>
<feature type="glycosylation site" description="N-linked (GlcNAc...) asparagine" evidence="1">
    <location>
        <position position="132"/>
    </location>
</feature>
<feature type="glycosylation site" description="N-linked (GlcNAc...) asparagine" evidence="1">
    <location>
        <position position="310"/>
    </location>
</feature>
<feature type="glycosylation site" description="N-linked (GlcNAc...) asparagine" evidence="1">
    <location>
        <position position="460"/>
    </location>
</feature>
<feature type="disulfide bond" evidence="2 5">
    <location>
        <begin position="244"/>
        <end position="273"/>
    </location>
</feature>
<feature type="disulfide bond" evidence="2 5">
    <location>
        <begin position="253"/>
        <end position="281"/>
    </location>
</feature>
<feature type="disulfide bond" evidence="2 5">
    <location>
        <begin position="257"/>
        <end position="286"/>
    </location>
</feature>
<feature type="cross-link" description="Isoglutamyl lysine isopeptide (Gln-Lys) (interchain with K-? in Factor 3(A))" evidence="1">
    <location>
        <position position="77"/>
    </location>
</feature>
<feature type="cross-link" description="Isoglutamyl lysine isopeptide (Gln-Lys) (interchain with K-? in Factor 3(A))" evidence="1">
    <location>
        <position position="78"/>
    </location>
</feature>
<feature type="strand" evidence="7">
    <location>
        <begin position="254"/>
        <end position="265"/>
    </location>
</feature>
<feature type="strand" evidence="7">
    <location>
        <begin position="276"/>
        <end position="280"/>
    </location>
</feature>
<dbReference type="EMBL" id="X13022">
    <property type="protein sequence ID" value="CAA31440.1"/>
    <property type="molecule type" value="Genomic_DNA"/>
</dbReference>
<dbReference type="PIR" id="S04531">
    <property type="entry name" value="S04531"/>
</dbReference>
<dbReference type="PDB" id="2BBX">
    <property type="method" value="NMR"/>
    <property type="chains" value="A=242-288"/>
</dbReference>
<dbReference type="PDBsum" id="2BBX"/>
<dbReference type="BMRB" id="P16893"/>
<dbReference type="SMR" id="P16893"/>
<dbReference type="GlyCosmos" id="P16893">
    <property type="glycosylation" value="3 sites, No reported glycans"/>
</dbReference>
<dbReference type="VEuPathDB" id="PlasmoDB:PF3D7_1335900"/>
<dbReference type="VEuPathDB" id="PlasmoDB:Pf7G8-2_000438600"/>
<dbReference type="VEuPathDB" id="PlasmoDB:Pf7G8_130040300"/>
<dbReference type="VEuPathDB" id="PlasmoDB:PfCD01_130041500"/>
<dbReference type="VEuPathDB" id="PlasmoDB:PfDd2_130041700"/>
<dbReference type="VEuPathDB" id="PlasmoDB:PfGA01_130042000"/>
<dbReference type="VEuPathDB" id="PlasmoDB:PfGB4_130041800"/>
<dbReference type="VEuPathDB" id="PlasmoDB:PfGN01_130042600"/>
<dbReference type="VEuPathDB" id="PlasmoDB:PfHB3_130042200"/>
<dbReference type="VEuPathDB" id="PlasmoDB:PfIT_130041200"/>
<dbReference type="VEuPathDB" id="PlasmoDB:PfKE01_130041500"/>
<dbReference type="VEuPathDB" id="PlasmoDB:PfKH01_130039900"/>
<dbReference type="VEuPathDB" id="PlasmoDB:PfKH02_130038800"/>
<dbReference type="VEuPathDB" id="PlasmoDB:PfML01_130039800"/>
<dbReference type="VEuPathDB" id="PlasmoDB:PfNF135_130040500"/>
<dbReference type="VEuPathDB" id="PlasmoDB:PfNF166_130041100"/>
<dbReference type="VEuPathDB" id="PlasmoDB:PfNF54_130040800"/>
<dbReference type="VEuPathDB" id="PlasmoDB:PfSD01_130042600"/>
<dbReference type="VEuPathDB" id="PlasmoDB:PfSN01_130038900"/>
<dbReference type="VEuPathDB" id="PlasmoDB:PfTG01_130041600"/>
<dbReference type="EvolutionaryTrace" id="P16893"/>
<dbReference type="GO" id="GO:0005886">
    <property type="term" value="C:plasma membrane"/>
    <property type="evidence" value="ECO:0007669"/>
    <property type="project" value="UniProtKB-SubCell"/>
</dbReference>
<dbReference type="GO" id="GO:0008201">
    <property type="term" value="F:heparin binding"/>
    <property type="evidence" value="ECO:0007669"/>
    <property type="project" value="UniProtKB-KW"/>
</dbReference>
<dbReference type="GO" id="GO:0007155">
    <property type="term" value="P:cell adhesion"/>
    <property type="evidence" value="ECO:0007669"/>
    <property type="project" value="UniProtKB-KW"/>
</dbReference>
<dbReference type="CDD" id="cd01471">
    <property type="entry name" value="vWA_micronemal_protein"/>
    <property type="match status" value="1"/>
</dbReference>
<dbReference type="FunFam" id="3.40.50.410:FF:000075">
    <property type="entry name" value="Sporozoite surface protein 2"/>
    <property type="match status" value="1"/>
</dbReference>
<dbReference type="Gene3D" id="2.20.100.10">
    <property type="entry name" value="Thrombospondin type-1 (TSP1) repeat"/>
    <property type="match status" value="1"/>
</dbReference>
<dbReference type="Gene3D" id="3.40.50.410">
    <property type="entry name" value="von Willebrand factor, type A domain"/>
    <property type="match status" value="1"/>
</dbReference>
<dbReference type="InterPro" id="IPR000884">
    <property type="entry name" value="TSP1_rpt"/>
</dbReference>
<dbReference type="InterPro" id="IPR036383">
    <property type="entry name" value="TSP1_rpt_sf"/>
</dbReference>
<dbReference type="InterPro" id="IPR002035">
    <property type="entry name" value="VWF_A"/>
</dbReference>
<dbReference type="InterPro" id="IPR036465">
    <property type="entry name" value="vWFA_dom_sf"/>
</dbReference>
<dbReference type="PANTHER" id="PTHR16059">
    <property type="entry name" value="ANTHRAX TOXIN RECEPTOR"/>
    <property type="match status" value="1"/>
</dbReference>
<dbReference type="PANTHER" id="PTHR16059:SF25">
    <property type="entry name" value="LYSOZYME"/>
    <property type="match status" value="1"/>
</dbReference>
<dbReference type="Pfam" id="PF00090">
    <property type="entry name" value="TSP_1"/>
    <property type="match status" value="1"/>
</dbReference>
<dbReference type="Pfam" id="PF00092">
    <property type="entry name" value="VWA"/>
    <property type="match status" value="1"/>
</dbReference>
<dbReference type="SMART" id="SM00209">
    <property type="entry name" value="TSP1"/>
    <property type="match status" value="1"/>
</dbReference>
<dbReference type="SMART" id="SM00327">
    <property type="entry name" value="VWA"/>
    <property type="match status" value="1"/>
</dbReference>
<dbReference type="SUPFAM" id="SSF82895">
    <property type="entry name" value="TSP-1 type 1 repeat"/>
    <property type="match status" value="1"/>
</dbReference>
<dbReference type="SUPFAM" id="SSF53300">
    <property type="entry name" value="vWA-like"/>
    <property type="match status" value="1"/>
</dbReference>
<dbReference type="PROSITE" id="PS50092">
    <property type="entry name" value="TSP1"/>
    <property type="match status" value="1"/>
</dbReference>
<dbReference type="PROSITE" id="PS50234">
    <property type="entry name" value="VWFA"/>
    <property type="match status" value="1"/>
</dbReference>
<comment type="subcellular location">
    <subcellularLocation>
        <location evidence="6">Cell membrane</location>
        <topology evidence="6">Single-pass membrane protein</topology>
    </subcellularLocation>
</comment>
<comment type="developmental stage">
    <text>Expressed during erythrocytic stage of life cycle.</text>
</comment>
<organism>
    <name type="scientific">Plasmodium falciparum</name>
    <dbReference type="NCBI Taxonomy" id="5833"/>
    <lineage>
        <taxon>Eukaryota</taxon>
        <taxon>Sar</taxon>
        <taxon>Alveolata</taxon>
        <taxon>Apicomplexa</taxon>
        <taxon>Aconoidasida</taxon>
        <taxon>Haemosporida</taxon>
        <taxon>Plasmodiidae</taxon>
        <taxon>Plasmodium</taxon>
        <taxon>Plasmodium (Laverania)</taxon>
    </lineage>
</organism>
<sequence>MNHLGNVKYLVIVFLIFFDLFLVNGRDVQNNIVDEIKYSEEVCNDQVDLYLLMDCSGSIRRHNWVNHAVPLAMKLIQQLNLNDNAIHLYVNVFSNNAKEIIRLHSDASKNKEKALIIIRSLLSTNLPYGRTNLTDALLQVRKHLNDRINRENANQLVVILTDGIPDSIQDSLKESRKLSDRGVKIAVFGIGQGINVAFNRFLVGCHPSDGKCNLYADSAWENVKNVIGPFMKAVCVEVEKTASCGVWDEWSPCSVTCGKGTRSRKREILHEGCTSEIQEQCEEERCPPKWEPLDVPDEPEDDQPRPRGDNSSVQKPEENIIDNNPQEPSPNPEEGKDENPNGFDLDENPENPPNPDIPEQKPNIPEDSEKEVPSDVPKNPEDDREENFDIPKKPENKHDNQNNLPNDKSDRNIPYSPLPPKVLDNERKQSDPQSQDNNGNRHVPNSEDRETRPHGRNNENRSYNRKYNDTPKHPEREEHEKPDNNKKKGESDNKYKIAGGIAGGLALLACAGLAYKFVVPGAATPYAGEPAPFDETLGEEDKDLDEPEQFRLPEENEWN</sequence>
<protein>
    <recommendedName>
        <fullName>Thrombospondin-related anonymous protein</fullName>
    </recommendedName>
</protein>
<accession>P16893</accession>
<gene>
    <name type="primary">TRAP</name>
</gene>
<evidence type="ECO:0000255" key="1"/>
<evidence type="ECO:0000255" key="2">
    <source>
        <dbReference type="PROSITE-ProRule" id="PRU00210"/>
    </source>
</evidence>
<evidence type="ECO:0000255" key="3">
    <source>
        <dbReference type="PROSITE-ProRule" id="PRU00219"/>
    </source>
</evidence>
<evidence type="ECO:0000256" key="4">
    <source>
        <dbReference type="SAM" id="MobiDB-lite"/>
    </source>
</evidence>
<evidence type="ECO:0000269" key="5">
    <source>
    </source>
</evidence>
<evidence type="ECO:0000305" key="6">
    <source>
    </source>
</evidence>
<evidence type="ECO:0007829" key="7">
    <source>
        <dbReference type="PDB" id="2BBX"/>
    </source>
</evidence>
<reference key="1">
    <citation type="journal article" date="1988" name="Nature">
        <title>A highly conserved amino-acid sequence in thrombospondin, properdin and in proteins from sporozoites and blood stages of a human malaria parasite.</title>
        <authorList>
            <person name="Robson K.J.H."/>
            <person name="Hall J.R.S."/>
            <person name="Jennings M.W."/>
            <person name="Harris T.J.R."/>
            <person name="Marsh K."/>
            <person name="Newbold C.I."/>
            <person name="Tate V.E."/>
            <person name="Weatherall D.J."/>
        </authorList>
    </citation>
    <scope>NUCLEOTIDE SEQUENCE [GENOMIC DNA]</scope>
</reference>
<reference key="2">
    <citation type="journal article" date="2006" name="Protein Sci.">
        <title>The layered fold of the TSR domain of P. falciparum TRAP contains a heparin binding site.</title>
        <authorList>
            <person name="Tossavainen H."/>
            <person name="Pihlajamaa T."/>
            <person name="Huttunen T.K."/>
            <person name="Raulo E."/>
            <person name="Rauvala H."/>
            <person name="Permi P."/>
            <person name="Kilpelainen I."/>
        </authorList>
    </citation>
    <scope>STRUCTURE BY NMR OF 241-288</scope>
    <scope>SUBCELLULAR LOCATION</scope>
    <scope>HEPARIN-BINDING</scope>
    <scope>DISULFIDE BONDS</scope>
</reference>